<dbReference type="EC" id="3.1.4.-" evidence="1"/>
<dbReference type="EMBL" id="AE016829">
    <property type="protein sequence ID" value="AAO91608.1"/>
    <property type="molecule type" value="Genomic_DNA"/>
</dbReference>
<dbReference type="RefSeq" id="NP_819048.1">
    <property type="nucleotide sequence ID" value="NC_004704.2"/>
</dbReference>
<dbReference type="RefSeq" id="WP_011109651.1">
    <property type="nucleotide sequence ID" value="NC_004704.2"/>
</dbReference>
<dbReference type="SMR" id="Q839Z9"/>
<dbReference type="EnsemblBacteria" id="AAO91608">
    <property type="protein sequence ID" value="AAO91608"/>
    <property type="gene ID" value="CBUA0032"/>
</dbReference>
<dbReference type="GeneID" id="1207862"/>
<dbReference type="KEGG" id="cbu:CBUA0032"/>
<dbReference type="PATRIC" id="fig|227377.7.peg.2122"/>
<dbReference type="eggNOG" id="COG1409">
    <property type="taxonomic scope" value="Bacteria"/>
</dbReference>
<dbReference type="HOGENOM" id="CLU_070320_0_0_6"/>
<dbReference type="OrthoDB" id="9784378at2"/>
<dbReference type="Proteomes" id="UP000002671">
    <property type="component" value="Plasmid pQpH1"/>
</dbReference>
<dbReference type="GO" id="GO:0004115">
    <property type="term" value="F:3',5'-cyclic-AMP phosphodiesterase activity"/>
    <property type="evidence" value="ECO:0007669"/>
    <property type="project" value="UniProtKB-EC"/>
</dbReference>
<dbReference type="GO" id="GO:0046872">
    <property type="term" value="F:metal ion binding"/>
    <property type="evidence" value="ECO:0007669"/>
    <property type="project" value="UniProtKB-KW"/>
</dbReference>
<dbReference type="GO" id="GO:0000166">
    <property type="term" value="F:nucleotide binding"/>
    <property type="evidence" value="ECO:0007669"/>
    <property type="project" value="UniProtKB-KW"/>
</dbReference>
<dbReference type="CDD" id="cd07402">
    <property type="entry name" value="MPP_GpdQ"/>
    <property type="match status" value="1"/>
</dbReference>
<dbReference type="Gene3D" id="3.60.21.10">
    <property type="match status" value="1"/>
</dbReference>
<dbReference type="InterPro" id="IPR004843">
    <property type="entry name" value="Calcineurin-like_PHP_ApaH"/>
</dbReference>
<dbReference type="InterPro" id="IPR050884">
    <property type="entry name" value="CNP_phosphodiesterase-III"/>
</dbReference>
<dbReference type="InterPro" id="IPR026575">
    <property type="entry name" value="GpdQ/CpdA-like"/>
</dbReference>
<dbReference type="InterPro" id="IPR029052">
    <property type="entry name" value="Metallo-depent_PP-like"/>
</dbReference>
<dbReference type="PANTHER" id="PTHR42988:SF2">
    <property type="entry name" value="CYCLIC NUCLEOTIDE PHOSPHODIESTERASE CBUA0032-RELATED"/>
    <property type="match status" value="1"/>
</dbReference>
<dbReference type="PANTHER" id="PTHR42988">
    <property type="entry name" value="PHOSPHOHYDROLASE"/>
    <property type="match status" value="1"/>
</dbReference>
<dbReference type="Pfam" id="PF00149">
    <property type="entry name" value="Metallophos"/>
    <property type="match status" value="1"/>
</dbReference>
<dbReference type="SUPFAM" id="SSF56300">
    <property type="entry name" value="Metallo-dependent phosphatases"/>
    <property type="match status" value="1"/>
</dbReference>
<reference key="1">
    <citation type="journal article" date="2003" name="Proc. Natl. Acad. Sci. U.S.A.">
        <title>Complete genome sequence of the Q-fever pathogen, Coxiella burnetii.</title>
        <authorList>
            <person name="Seshadri R."/>
            <person name="Paulsen I.T."/>
            <person name="Eisen J.A."/>
            <person name="Read T.D."/>
            <person name="Nelson K.E."/>
            <person name="Nelson W.C."/>
            <person name="Ward N.L."/>
            <person name="Tettelin H."/>
            <person name="Davidsen T.M."/>
            <person name="Beanan M.J."/>
            <person name="DeBoy R.T."/>
            <person name="Daugherty S.C."/>
            <person name="Brinkac L.M."/>
            <person name="Madupu R."/>
            <person name="Dodson R.J."/>
            <person name="Khouri H.M."/>
            <person name="Lee K.H."/>
            <person name="Carty H.A."/>
            <person name="Scanlan D."/>
            <person name="Heinzen R.A."/>
            <person name="Thompson H.A."/>
            <person name="Samuel J.E."/>
            <person name="Fraser C.M."/>
            <person name="Heidelberg J.F."/>
        </authorList>
    </citation>
    <scope>NUCLEOTIDE SEQUENCE [LARGE SCALE GENOMIC DNA]</scope>
    <source>
        <strain>RSA 493 / Nine Mile phase I</strain>
    </source>
</reference>
<organism>
    <name type="scientific">Coxiella burnetii (strain RSA 493 / Nine Mile phase I)</name>
    <dbReference type="NCBI Taxonomy" id="227377"/>
    <lineage>
        <taxon>Bacteria</taxon>
        <taxon>Pseudomonadati</taxon>
        <taxon>Pseudomonadota</taxon>
        <taxon>Gammaproteobacteria</taxon>
        <taxon>Legionellales</taxon>
        <taxon>Coxiellaceae</taxon>
        <taxon>Coxiella</taxon>
    </lineage>
</organism>
<evidence type="ECO:0000250" key="1">
    <source>
        <dbReference type="UniProtKB" id="P9WP65"/>
    </source>
</evidence>
<evidence type="ECO:0000250" key="2">
    <source>
        <dbReference type="UniProtKB" id="Q6XBH1"/>
    </source>
</evidence>
<evidence type="ECO:0000305" key="3"/>
<gene>
    <name type="ordered locus">CBUA0032</name>
</gene>
<geneLocation type="plasmid">
    <name>pQpH1</name>
</geneLocation>
<accession>Q839Z9</accession>
<proteinExistence type="inferred from homology"/>
<feature type="chain" id="PRO_0000413366" description="Probable cyclic nucleotide phosphodiesterase CBUA0032">
    <location>
        <begin position="1"/>
        <end position="248"/>
    </location>
</feature>
<feature type="binding site" evidence="2">
    <location>
        <position position="13"/>
    </location>
    <ligand>
        <name>Fe cation</name>
        <dbReference type="ChEBI" id="CHEBI:24875"/>
        <label>1</label>
    </ligand>
</feature>
<feature type="binding site" evidence="1">
    <location>
        <position position="15"/>
    </location>
    <ligand>
        <name>AMP</name>
        <dbReference type="ChEBI" id="CHEBI:456215"/>
    </ligand>
</feature>
<feature type="binding site" evidence="2">
    <location>
        <position position="15"/>
    </location>
    <ligand>
        <name>Fe cation</name>
        <dbReference type="ChEBI" id="CHEBI:24875"/>
        <label>1</label>
    </ligand>
</feature>
<feature type="binding site" evidence="1">
    <location>
        <position position="52"/>
    </location>
    <ligand>
        <name>AMP</name>
        <dbReference type="ChEBI" id="CHEBI:456215"/>
    </ligand>
</feature>
<feature type="binding site" evidence="2">
    <location>
        <position position="52"/>
    </location>
    <ligand>
        <name>Fe cation</name>
        <dbReference type="ChEBI" id="CHEBI:24875"/>
        <label>1</label>
    </ligand>
</feature>
<feature type="binding site" evidence="2">
    <location>
        <position position="52"/>
    </location>
    <ligand>
        <name>Fe cation</name>
        <dbReference type="ChEBI" id="CHEBI:24875"/>
        <label>2</label>
    </ligand>
</feature>
<feature type="binding site" evidence="1">
    <location>
        <begin position="82"/>
        <end position="83"/>
    </location>
    <ligand>
        <name>AMP</name>
        <dbReference type="ChEBI" id="CHEBI:456215"/>
    </ligand>
</feature>
<feature type="binding site" evidence="2">
    <location>
        <position position="82"/>
    </location>
    <ligand>
        <name>Fe cation</name>
        <dbReference type="ChEBI" id="CHEBI:24875"/>
        <label>2</label>
    </ligand>
</feature>
<feature type="binding site" evidence="2">
    <location>
        <position position="152"/>
    </location>
    <ligand>
        <name>Fe cation</name>
        <dbReference type="ChEBI" id="CHEBI:24875"/>
        <label>2</label>
    </ligand>
</feature>
<feature type="binding site" evidence="2">
    <location>
        <position position="191"/>
    </location>
    <ligand>
        <name>Fe cation</name>
        <dbReference type="ChEBI" id="CHEBI:24875"/>
        <label>2</label>
    </ligand>
</feature>
<feature type="binding site" evidence="1">
    <location>
        <position position="193"/>
    </location>
    <ligand>
        <name>AMP</name>
        <dbReference type="ChEBI" id="CHEBI:456215"/>
    </ligand>
</feature>
<feature type="binding site" evidence="2">
    <location>
        <position position="193"/>
    </location>
    <ligand>
        <name>Fe cation</name>
        <dbReference type="ChEBI" id="CHEBI:24875"/>
        <label>1</label>
    </ligand>
</feature>
<keyword id="KW-0378">Hydrolase</keyword>
<keyword id="KW-0408">Iron</keyword>
<keyword id="KW-0479">Metal-binding</keyword>
<keyword id="KW-0547">Nucleotide-binding</keyword>
<keyword id="KW-0614">Plasmid</keyword>
<keyword id="KW-1185">Reference proteome</keyword>
<name>CNPD3_COXBU</name>
<comment type="cofactor">
    <cofactor evidence="2">
        <name>Fe(2+)</name>
        <dbReference type="ChEBI" id="CHEBI:29033"/>
    </cofactor>
    <text evidence="2">Binds 2 Fe(2+) ions per subunit.</text>
</comment>
<comment type="similarity">
    <text evidence="3">Belongs to the cyclic nucleotide phosphodiesterase class-III family.</text>
</comment>
<protein>
    <recommendedName>
        <fullName evidence="1">Probable cyclic nucleotide phosphodiesterase CBUA0032</fullName>
        <ecNumber evidence="1">3.1.4.-</ecNumber>
    </recommendedName>
</protein>
<sequence length="248" mass="29002">MEDNCIKIAQVSDLHLTSENCETSRGRYSNAMNVFSAISLSGQHDMIFITGDISDDYTENSYKQLLEMLKKLTCRVFVIPGNHDDVNLMNKIIPEKYLFSPETVTSFNTFDFLFVNTVVNGEIHGLLTDQDLSLFQNHLENSGNKKKCIIMHHNPIPLNRKIYDKYMLLNYQDFLRIICLYDNVKLVIFGHVHNDYTISYRQTLFSSAPATCYQIKKFESDIIIEEKYGYKNYFLFEEFIETNCIWIK</sequence>